<keyword id="KW-0378">Hydrolase</keyword>
<keyword id="KW-1185">Reference proteome</keyword>
<sequence length="281" mass="32756">MERAGICHSDGFDLAYRIEGEGAPILVIGSAVYYPRLFSSDIKQKYQWVFVDHRGFAKPKRELRAEDSRLDAVLADIERMRTFLQLEDVTILGHSGHAFMALEYARTYPKQVRKVALFNTAPDNSEERQRKSESFFMETASLERKKRFEKDIENLPQDIDKDPERRFVHMCIRAEAKSFYQERPHAAALWDGVFTNMPIIDELWGNTFARIDLLQRLADVRMPVYIGLGRYDYLVAPVSLWDAVDGLYPHVDKVIFEKSGHQPMLEEPEAFDQSFRKWLDQ</sequence>
<evidence type="ECO:0000250" key="1"/>
<evidence type="ECO:0000255" key="2"/>
<evidence type="ECO:0000305" key="3"/>
<feature type="chain" id="PRO_0000360628" description="AB hydrolase superfamily protein YclE">
    <location>
        <begin position="1"/>
        <end position="281"/>
    </location>
</feature>
<feature type="domain" description="AB hydrolase-1" evidence="2">
    <location>
        <begin position="30"/>
        <end position="268"/>
    </location>
</feature>
<feature type="active site" description="Nucleophile" evidence="1">
    <location>
        <position position="95"/>
    </location>
</feature>
<feature type="active site" evidence="1">
    <location>
        <position position="232"/>
    </location>
</feature>
<feature type="active site" description="Proton donor" evidence="1">
    <location>
        <position position="261"/>
    </location>
</feature>
<feature type="sequence conflict" description="In Ref. 1; BAA08999." evidence="3" ref="1">
    <original>V</original>
    <variation>A</variation>
    <location>
        <position position="32"/>
    </location>
</feature>
<feature type="sequence conflict" description="In Ref. 1; BAA08999." evidence="3" ref="1">
    <original>I</original>
    <variation>T</variation>
    <location>
        <position position="91"/>
    </location>
</feature>
<protein>
    <recommendedName>
        <fullName>AB hydrolase superfamily protein YclE</fullName>
        <ecNumber>3.-.-.-</ecNumber>
    </recommendedName>
</protein>
<gene>
    <name type="primary">yclE</name>
    <name type="ordered locus">BSU03660</name>
</gene>
<dbReference type="EC" id="3.-.-.-"/>
<dbReference type="EMBL" id="D50453">
    <property type="protein sequence ID" value="BAA08999.1"/>
    <property type="molecule type" value="Genomic_DNA"/>
</dbReference>
<dbReference type="EMBL" id="AL009126">
    <property type="protein sequence ID" value="CAB12160.2"/>
    <property type="molecule type" value="Genomic_DNA"/>
</dbReference>
<dbReference type="PIR" id="B69762">
    <property type="entry name" value="B69762"/>
</dbReference>
<dbReference type="RefSeq" id="NP_388248.2">
    <property type="nucleotide sequence ID" value="NC_000964.3"/>
</dbReference>
<dbReference type="RefSeq" id="WP_003246662.1">
    <property type="nucleotide sequence ID" value="NZ_OZ025638.1"/>
</dbReference>
<dbReference type="SMR" id="P94407"/>
<dbReference type="FunCoup" id="P94407">
    <property type="interactions" value="117"/>
</dbReference>
<dbReference type="STRING" id="224308.BSU03660"/>
<dbReference type="ESTHER" id="bacsu-yclE">
    <property type="family name" value="AlphaBeta_hydrolase"/>
</dbReference>
<dbReference type="PaxDb" id="224308-BSU03660"/>
<dbReference type="EnsemblBacteria" id="CAB12160">
    <property type="protein sequence ID" value="CAB12160"/>
    <property type="gene ID" value="BSU_03660"/>
</dbReference>
<dbReference type="GeneID" id="938288"/>
<dbReference type="KEGG" id="bsu:BSU03660"/>
<dbReference type="PATRIC" id="fig|224308.179.peg.386"/>
<dbReference type="eggNOG" id="COG0596">
    <property type="taxonomic scope" value="Bacteria"/>
</dbReference>
<dbReference type="InParanoid" id="P94407"/>
<dbReference type="OrthoDB" id="53505at2"/>
<dbReference type="PhylomeDB" id="P94407"/>
<dbReference type="BioCyc" id="BSUB:BSU03660-MONOMER"/>
<dbReference type="Proteomes" id="UP000001570">
    <property type="component" value="Chromosome"/>
</dbReference>
<dbReference type="GO" id="GO:0016020">
    <property type="term" value="C:membrane"/>
    <property type="evidence" value="ECO:0000318"/>
    <property type="project" value="GO_Central"/>
</dbReference>
<dbReference type="GO" id="GO:0016787">
    <property type="term" value="F:hydrolase activity"/>
    <property type="evidence" value="ECO:0007669"/>
    <property type="project" value="UniProtKB-KW"/>
</dbReference>
<dbReference type="Gene3D" id="3.40.50.1820">
    <property type="entry name" value="alpha/beta hydrolase"/>
    <property type="match status" value="1"/>
</dbReference>
<dbReference type="InterPro" id="IPR000073">
    <property type="entry name" value="AB_hydrolase_1"/>
</dbReference>
<dbReference type="InterPro" id="IPR029058">
    <property type="entry name" value="AB_hydrolase_fold"/>
</dbReference>
<dbReference type="InterPro" id="IPR050266">
    <property type="entry name" value="AB_hydrolase_sf"/>
</dbReference>
<dbReference type="PANTHER" id="PTHR43798:SF31">
    <property type="entry name" value="AB HYDROLASE SUPERFAMILY PROTEIN YCLE"/>
    <property type="match status" value="1"/>
</dbReference>
<dbReference type="PANTHER" id="PTHR43798">
    <property type="entry name" value="MONOACYLGLYCEROL LIPASE"/>
    <property type="match status" value="1"/>
</dbReference>
<dbReference type="Pfam" id="PF00561">
    <property type="entry name" value="Abhydrolase_1"/>
    <property type="match status" value="1"/>
</dbReference>
<dbReference type="SUPFAM" id="SSF53474">
    <property type="entry name" value="alpha/beta-Hydrolases"/>
    <property type="match status" value="1"/>
</dbReference>
<organism>
    <name type="scientific">Bacillus subtilis (strain 168)</name>
    <dbReference type="NCBI Taxonomy" id="224308"/>
    <lineage>
        <taxon>Bacteria</taxon>
        <taxon>Bacillati</taxon>
        <taxon>Bacillota</taxon>
        <taxon>Bacilli</taxon>
        <taxon>Bacillales</taxon>
        <taxon>Bacillaceae</taxon>
        <taxon>Bacillus</taxon>
    </lineage>
</organism>
<comment type="similarity">
    <text evidence="3">Belongs to the AB hydrolase superfamily.</text>
</comment>
<accession>P94407</accession>
<accession>Q797P6</accession>
<name>YCLE_BACSU</name>
<reference key="1">
    <citation type="journal article" date="1996" name="Microbiology">
        <title>The 25 degrees-36 degrees region of the Bacillus subtilis chromosome: determination of the sequence of a 146 kb segment and identification of 113 genes.</title>
        <authorList>
            <person name="Yamane K."/>
            <person name="Kumano M."/>
            <person name="Kurita K."/>
        </authorList>
    </citation>
    <scope>NUCLEOTIDE SEQUENCE [GENOMIC DNA]</scope>
    <source>
        <strain>168</strain>
    </source>
</reference>
<reference key="2">
    <citation type="journal article" date="1997" name="Nature">
        <title>The complete genome sequence of the Gram-positive bacterium Bacillus subtilis.</title>
        <authorList>
            <person name="Kunst F."/>
            <person name="Ogasawara N."/>
            <person name="Moszer I."/>
            <person name="Albertini A.M."/>
            <person name="Alloni G."/>
            <person name="Azevedo V."/>
            <person name="Bertero M.G."/>
            <person name="Bessieres P."/>
            <person name="Bolotin A."/>
            <person name="Borchert S."/>
            <person name="Borriss R."/>
            <person name="Boursier L."/>
            <person name="Brans A."/>
            <person name="Braun M."/>
            <person name="Brignell S.C."/>
            <person name="Bron S."/>
            <person name="Brouillet S."/>
            <person name="Bruschi C.V."/>
            <person name="Caldwell B."/>
            <person name="Capuano V."/>
            <person name="Carter N.M."/>
            <person name="Choi S.-K."/>
            <person name="Codani J.-J."/>
            <person name="Connerton I.F."/>
            <person name="Cummings N.J."/>
            <person name="Daniel R.A."/>
            <person name="Denizot F."/>
            <person name="Devine K.M."/>
            <person name="Duesterhoeft A."/>
            <person name="Ehrlich S.D."/>
            <person name="Emmerson P.T."/>
            <person name="Entian K.-D."/>
            <person name="Errington J."/>
            <person name="Fabret C."/>
            <person name="Ferrari E."/>
            <person name="Foulger D."/>
            <person name="Fritz C."/>
            <person name="Fujita M."/>
            <person name="Fujita Y."/>
            <person name="Fuma S."/>
            <person name="Galizzi A."/>
            <person name="Galleron N."/>
            <person name="Ghim S.-Y."/>
            <person name="Glaser P."/>
            <person name="Goffeau A."/>
            <person name="Golightly E.J."/>
            <person name="Grandi G."/>
            <person name="Guiseppi G."/>
            <person name="Guy B.J."/>
            <person name="Haga K."/>
            <person name="Haiech J."/>
            <person name="Harwood C.R."/>
            <person name="Henaut A."/>
            <person name="Hilbert H."/>
            <person name="Holsappel S."/>
            <person name="Hosono S."/>
            <person name="Hullo M.-F."/>
            <person name="Itaya M."/>
            <person name="Jones L.-M."/>
            <person name="Joris B."/>
            <person name="Karamata D."/>
            <person name="Kasahara Y."/>
            <person name="Klaerr-Blanchard M."/>
            <person name="Klein C."/>
            <person name="Kobayashi Y."/>
            <person name="Koetter P."/>
            <person name="Koningstein G."/>
            <person name="Krogh S."/>
            <person name="Kumano M."/>
            <person name="Kurita K."/>
            <person name="Lapidus A."/>
            <person name="Lardinois S."/>
            <person name="Lauber J."/>
            <person name="Lazarevic V."/>
            <person name="Lee S.-M."/>
            <person name="Levine A."/>
            <person name="Liu H."/>
            <person name="Masuda S."/>
            <person name="Mauel C."/>
            <person name="Medigue C."/>
            <person name="Medina N."/>
            <person name="Mellado R.P."/>
            <person name="Mizuno M."/>
            <person name="Moestl D."/>
            <person name="Nakai S."/>
            <person name="Noback M."/>
            <person name="Noone D."/>
            <person name="O'Reilly M."/>
            <person name="Ogawa K."/>
            <person name="Ogiwara A."/>
            <person name="Oudega B."/>
            <person name="Park S.-H."/>
            <person name="Parro V."/>
            <person name="Pohl T.M."/>
            <person name="Portetelle D."/>
            <person name="Porwollik S."/>
            <person name="Prescott A.M."/>
            <person name="Presecan E."/>
            <person name="Pujic P."/>
            <person name="Purnelle B."/>
            <person name="Rapoport G."/>
            <person name="Rey M."/>
            <person name="Reynolds S."/>
            <person name="Rieger M."/>
            <person name="Rivolta C."/>
            <person name="Rocha E."/>
            <person name="Roche B."/>
            <person name="Rose M."/>
            <person name="Sadaie Y."/>
            <person name="Sato T."/>
            <person name="Scanlan E."/>
            <person name="Schleich S."/>
            <person name="Schroeter R."/>
            <person name="Scoffone F."/>
            <person name="Sekiguchi J."/>
            <person name="Sekowska A."/>
            <person name="Seror S.J."/>
            <person name="Serror P."/>
            <person name="Shin B.-S."/>
            <person name="Soldo B."/>
            <person name="Sorokin A."/>
            <person name="Tacconi E."/>
            <person name="Takagi T."/>
            <person name="Takahashi H."/>
            <person name="Takemaru K."/>
            <person name="Takeuchi M."/>
            <person name="Tamakoshi A."/>
            <person name="Tanaka T."/>
            <person name="Terpstra P."/>
            <person name="Tognoni A."/>
            <person name="Tosato V."/>
            <person name="Uchiyama S."/>
            <person name="Vandenbol M."/>
            <person name="Vannier F."/>
            <person name="Vassarotti A."/>
            <person name="Viari A."/>
            <person name="Wambutt R."/>
            <person name="Wedler E."/>
            <person name="Wedler H."/>
            <person name="Weitzenegger T."/>
            <person name="Winters P."/>
            <person name="Wipat A."/>
            <person name="Yamamoto H."/>
            <person name="Yamane K."/>
            <person name="Yasumoto K."/>
            <person name="Yata K."/>
            <person name="Yoshida K."/>
            <person name="Yoshikawa H.-F."/>
            <person name="Zumstein E."/>
            <person name="Yoshikawa H."/>
            <person name="Danchin A."/>
        </authorList>
    </citation>
    <scope>NUCLEOTIDE SEQUENCE [LARGE SCALE GENOMIC DNA]</scope>
    <source>
        <strain>168</strain>
    </source>
</reference>
<reference key="3">
    <citation type="journal article" date="2009" name="Microbiology">
        <title>From a consortium sequence to a unified sequence: the Bacillus subtilis 168 reference genome a decade later.</title>
        <authorList>
            <person name="Barbe V."/>
            <person name="Cruveiller S."/>
            <person name="Kunst F."/>
            <person name="Lenoble P."/>
            <person name="Meurice G."/>
            <person name="Sekowska A."/>
            <person name="Vallenet D."/>
            <person name="Wang T."/>
            <person name="Moszer I."/>
            <person name="Medigue C."/>
            <person name="Danchin A."/>
        </authorList>
    </citation>
    <scope>SEQUENCE REVISION TO 32 AND 91</scope>
</reference>
<proteinExistence type="inferred from homology"/>